<keyword id="KW-0001">2Fe-2S</keyword>
<keyword id="KW-0004">4Fe-4S</keyword>
<keyword id="KW-0093">Biotin biosynthesis</keyword>
<keyword id="KW-0408">Iron</keyword>
<keyword id="KW-0411">Iron-sulfur</keyword>
<keyword id="KW-0479">Metal-binding</keyword>
<keyword id="KW-1185">Reference proteome</keyword>
<keyword id="KW-0949">S-adenosyl-L-methionine</keyword>
<keyword id="KW-0808">Transferase</keyword>
<evidence type="ECO:0000255" key="1">
    <source>
        <dbReference type="HAMAP-Rule" id="MF_01694"/>
    </source>
</evidence>
<evidence type="ECO:0000255" key="2">
    <source>
        <dbReference type="PROSITE-ProRule" id="PRU01266"/>
    </source>
</evidence>
<proteinExistence type="inferred from homology"/>
<comment type="function">
    <text evidence="1">Catalyzes the conversion of dethiobiotin (DTB) to biotin by the insertion of a sulfur atom into dethiobiotin via a radical-based mechanism.</text>
</comment>
<comment type="catalytic activity">
    <reaction evidence="1">
        <text>(4R,5S)-dethiobiotin + (sulfur carrier)-SH + 2 reduced [2Fe-2S]-[ferredoxin] + 2 S-adenosyl-L-methionine = (sulfur carrier)-H + biotin + 2 5'-deoxyadenosine + 2 L-methionine + 2 oxidized [2Fe-2S]-[ferredoxin]</text>
        <dbReference type="Rhea" id="RHEA:22060"/>
        <dbReference type="Rhea" id="RHEA-COMP:10000"/>
        <dbReference type="Rhea" id="RHEA-COMP:10001"/>
        <dbReference type="Rhea" id="RHEA-COMP:14737"/>
        <dbReference type="Rhea" id="RHEA-COMP:14739"/>
        <dbReference type="ChEBI" id="CHEBI:17319"/>
        <dbReference type="ChEBI" id="CHEBI:29917"/>
        <dbReference type="ChEBI" id="CHEBI:33737"/>
        <dbReference type="ChEBI" id="CHEBI:33738"/>
        <dbReference type="ChEBI" id="CHEBI:57586"/>
        <dbReference type="ChEBI" id="CHEBI:57844"/>
        <dbReference type="ChEBI" id="CHEBI:59789"/>
        <dbReference type="ChEBI" id="CHEBI:64428"/>
        <dbReference type="ChEBI" id="CHEBI:149473"/>
        <dbReference type="EC" id="2.8.1.6"/>
    </reaction>
</comment>
<comment type="cofactor">
    <cofactor evidence="1">
        <name>[4Fe-4S] cluster</name>
        <dbReference type="ChEBI" id="CHEBI:49883"/>
    </cofactor>
    <text evidence="1">Binds 1 [4Fe-4S] cluster. The cluster is coordinated with 3 cysteines and an exchangeable S-adenosyl-L-methionine.</text>
</comment>
<comment type="cofactor">
    <cofactor evidence="1">
        <name>[2Fe-2S] cluster</name>
        <dbReference type="ChEBI" id="CHEBI:190135"/>
    </cofactor>
    <text evidence="1">Binds 1 [2Fe-2S] cluster. The cluster is coordinated with 3 cysteines and 1 arginine.</text>
</comment>
<comment type="pathway">
    <text evidence="1">Cofactor biosynthesis; biotin biosynthesis; biotin from 7,8-diaminononanoate: step 2/2.</text>
</comment>
<comment type="subunit">
    <text evidence="1">Homodimer.</text>
</comment>
<comment type="similarity">
    <text evidence="1">Belongs to the radical SAM superfamily. Biotin synthase family.</text>
</comment>
<accession>Q74CT7</accession>
<protein>
    <recommendedName>
        <fullName evidence="1">Biotin synthase</fullName>
        <ecNumber evidence="1">2.8.1.6</ecNumber>
    </recommendedName>
</protein>
<dbReference type="EC" id="2.8.1.6" evidence="1"/>
<dbReference type="EMBL" id="AE017180">
    <property type="protein sequence ID" value="AAR34958.1"/>
    <property type="molecule type" value="Genomic_DNA"/>
</dbReference>
<dbReference type="RefSeq" id="NP_952635.1">
    <property type="nucleotide sequence ID" value="NC_002939.5"/>
</dbReference>
<dbReference type="RefSeq" id="WP_010942229.1">
    <property type="nucleotide sequence ID" value="NC_002939.5"/>
</dbReference>
<dbReference type="SMR" id="Q74CT7"/>
<dbReference type="FunCoup" id="Q74CT7">
    <property type="interactions" value="368"/>
</dbReference>
<dbReference type="STRING" id="243231.GSU1584"/>
<dbReference type="EnsemblBacteria" id="AAR34958">
    <property type="protein sequence ID" value="AAR34958"/>
    <property type="gene ID" value="GSU1584"/>
</dbReference>
<dbReference type="KEGG" id="gsu:GSU1584"/>
<dbReference type="PATRIC" id="fig|243231.5.peg.1625"/>
<dbReference type="eggNOG" id="COG0502">
    <property type="taxonomic scope" value="Bacteria"/>
</dbReference>
<dbReference type="HOGENOM" id="CLU_033172_2_1_7"/>
<dbReference type="InParanoid" id="Q74CT7"/>
<dbReference type="OrthoDB" id="9786826at2"/>
<dbReference type="UniPathway" id="UPA00078">
    <property type="reaction ID" value="UER00162"/>
</dbReference>
<dbReference type="Proteomes" id="UP000000577">
    <property type="component" value="Chromosome"/>
</dbReference>
<dbReference type="GO" id="GO:0051537">
    <property type="term" value="F:2 iron, 2 sulfur cluster binding"/>
    <property type="evidence" value="ECO:0000318"/>
    <property type="project" value="GO_Central"/>
</dbReference>
<dbReference type="GO" id="GO:0051539">
    <property type="term" value="F:4 iron, 4 sulfur cluster binding"/>
    <property type="evidence" value="ECO:0007669"/>
    <property type="project" value="UniProtKB-KW"/>
</dbReference>
<dbReference type="GO" id="GO:0004076">
    <property type="term" value="F:biotin synthase activity"/>
    <property type="evidence" value="ECO:0000318"/>
    <property type="project" value="GO_Central"/>
</dbReference>
<dbReference type="GO" id="GO:0005506">
    <property type="term" value="F:iron ion binding"/>
    <property type="evidence" value="ECO:0007669"/>
    <property type="project" value="UniProtKB-UniRule"/>
</dbReference>
<dbReference type="GO" id="GO:0009102">
    <property type="term" value="P:biotin biosynthetic process"/>
    <property type="evidence" value="ECO:0000318"/>
    <property type="project" value="GO_Central"/>
</dbReference>
<dbReference type="CDD" id="cd01335">
    <property type="entry name" value="Radical_SAM"/>
    <property type="match status" value="1"/>
</dbReference>
<dbReference type="FunFam" id="3.20.20.70:FF:000026">
    <property type="entry name" value="Biotin synthase"/>
    <property type="match status" value="1"/>
</dbReference>
<dbReference type="Gene3D" id="3.20.20.70">
    <property type="entry name" value="Aldolase class I"/>
    <property type="match status" value="1"/>
</dbReference>
<dbReference type="HAMAP" id="MF_01694">
    <property type="entry name" value="BioB"/>
    <property type="match status" value="1"/>
</dbReference>
<dbReference type="InterPro" id="IPR013785">
    <property type="entry name" value="Aldolase_TIM"/>
</dbReference>
<dbReference type="InterPro" id="IPR010722">
    <property type="entry name" value="BATS_dom"/>
</dbReference>
<dbReference type="InterPro" id="IPR002684">
    <property type="entry name" value="Biotin_synth/BioAB"/>
</dbReference>
<dbReference type="InterPro" id="IPR024177">
    <property type="entry name" value="Biotin_synthase"/>
</dbReference>
<dbReference type="InterPro" id="IPR006638">
    <property type="entry name" value="Elp3/MiaA/NifB-like_rSAM"/>
</dbReference>
<dbReference type="InterPro" id="IPR007197">
    <property type="entry name" value="rSAM"/>
</dbReference>
<dbReference type="NCBIfam" id="TIGR00433">
    <property type="entry name" value="bioB"/>
    <property type="match status" value="1"/>
</dbReference>
<dbReference type="PANTHER" id="PTHR22976">
    <property type="entry name" value="BIOTIN SYNTHASE"/>
    <property type="match status" value="1"/>
</dbReference>
<dbReference type="PANTHER" id="PTHR22976:SF2">
    <property type="entry name" value="BIOTIN SYNTHASE, MITOCHONDRIAL"/>
    <property type="match status" value="1"/>
</dbReference>
<dbReference type="Pfam" id="PF06968">
    <property type="entry name" value="BATS"/>
    <property type="match status" value="1"/>
</dbReference>
<dbReference type="Pfam" id="PF04055">
    <property type="entry name" value="Radical_SAM"/>
    <property type="match status" value="1"/>
</dbReference>
<dbReference type="PIRSF" id="PIRSF001619">
    <property type="entry name" value="Biotin_synth"/>
    <property type="match status" value="1"/>
</dbReference>
<dbReference type="SFLD" id="SFLDG01278">
    <property type="entry name" value="biotin_synthase_like"/>
    <property type="match status" value="1"/>
</dbReference>
<dbReference type="SFLD" id="SFLDS00029">
    <property type="entry name" value="Radical_SAM"/>
    <property type="match status" value="1"/>
</dbReference>
<dbReference type="SMART" id="SM00876">
    <property type="entry name" value="BATS"/>
    <property type="match status" value="1"/>
</dbReference>
<dbReference type="SMART" id="SM00729">
    <property type="entry name" value="Elp3"/>
    <property type="match status" value="1"/>
</dbReference>
<dbReference type="SUPFAM" id="SSF102114">
    <property type="entry name" value="Radical SAM enzymes"/>
    <property type="match status" value="1"/>
</dbReference>
<dbReference type="PROSITE" id="PS51918">
    <property type="entry name" value="RADICAL_SAM"/>
    <property type="match status" value="1"/>
</dbReference>
<name>BIOB_GEOSL</name>
<gene>
    <name evidence="1" type="primary">bioB</name>
    <name type="ordered locus">GSU1584</name>
</gene>
<organism>
    <name type="scientific">Geobacter sulfurreducens (strain ATCC 51573 / DSM 12127 / PCA)</name>
    <dbReference type="NCBI Taxonomy" id="243231"/>
    <lineage>
        <taxon>Bacteria</taxon>
        <taxon>Pseudomonadati</taxon>
        <taxon>Thermodesulfobacteriota</taxon>
        <taxon>Desulfuromonadia</taxon>
        <taxon>Geobacterales</taxon>
        <taxon>Geobacteraceae</taxon>
        <taxon>Geobacter</taxon>
    </lineage>
</organism>
<sequence>MINYPESLANRIIKGSTLDKDEANELLLLEGTDANALFLAASRVRDHFLGTGVDLCSIINAKSGRCPENCAFCAQSAHHATNAPVYPLVDEEQITACAREAAGAGSHCFGIVTSGSAISRGEELDRICRALRRIRRETAIEPSCSLGVIDYETALALREAGAVTYHHNLETARSFFPNVCTTHDYEEDVETVRVAKRAGLKVCCGGIFGLGETPEQRVEMALTLRELDVDSIPLNFLNPIEGTPLAGADRITPLECLKTIAVYRLILPDRKIAVCGGRERNLRDLQSWMFFAGASGTMIGNYLTTTGRPPEQDWQMLADLGLTVRQCNG</sequence>
<reference key="1">
    <citation type="journal article" date="2003" name="Science">
        <title>Genome of Geobacter sulfurreducens: metal reduction in subsurface environments.</title>
        <authorList>
            <person name="Methe B.A."/>
            <person name="Nelson K.E."/>
            <person name="Eisen J.A."/>
            <person name="Paulsen I.T."/>
            <person name="Nelson W.C."/>
            <person name="Heidelberg J.F."/>
            <person name="Wu D."/>
            <person name="Wu M."/>
            <person name="Ward N.L."/>
            <person name="Beanan M.J."/>
            <person name="Dodson R.J."/>
            <person name="Madupu R."/>
            <person name="Brinkac L.M."/>
            <person name="Daugherty S.C."/>
            <person name="DeBoy R.T."/>
            <person name="Durkin A.S."/>
            <person name="Gwinn M.L."/>
            <person name="Kolonay J.F."/>
            <person name="Sullivan S.A."/>
            <person name="Haft D.H."/>
            <person name="Selengut J."/>
            <person name="Davidsen T.M."/>
            <person name="Zafar N."/>
            <person name="White O."/>
            <person name="Tran B."/>
            <person name="Romero C."/>
            <person name="Forberger H.A."/>
            <person name="Weidman J.F."/>
            <person name="Khouri H.M."/>
            <person name="Feldblyum T.V."/>
            <person name="Utterback T.R."/>
            <person name="Van Aken S.E."/>
            <person name="Lovley D.R."/>
            <person name="Fraser C.M."/>
        </authorList>
    </citation>
    <scope>NUCLEOTIDE SEQUENCE [LARGE SCALE GENOMIC DNA]</scope>
    <source>
        <strain>ATCC 51573 / DSM 12127 / PCA</strain>
    </source>
</reference>
<feature type="chain" id="PRO_0000381405" description="Biotin synthase">
    <location>
        <begin position="1"/>
        <end position="329"/>
    </location>
</feature>
<feature type="domain" description="Radical SAM core" evidence="2">
    <location>
        <begin position="48"/>
        <end position="278"/>
    </location>
</feature>
<feature type="binding site" evidence="1">
    <location>
        <position position="66"/>
    </location>
    <ligand>
        <name>[4Fe-4S] cluster</name>
        <dbReference type="ChEBI" id="CHEBI:49883"/>
        <note>4Fe-4S-S-AdoMet</note>
    </ligand>
</feature>
<feature type="binding site" evidence="1">
    <location>
        <position position="70"/>
    </location>
    <ligand>
        <name>[4Fe-4S] cluster</name>
        <dbReference type="ChEBI" id="CHEBI:49883"/>
        <note>4Fe-4S-S-AdoMet</note>
    </ligand>
</feature>
<feature type="binding site" evidence="1">
    <location>
        <position position="73"/>
    </location>
    <ligand>
        <name>[4Fe-4S] cluster</name>
        <dbReference type="ChEBI" id="CHEBI:49883"/>
        <note>4Fe-4S-S-AdoMet</note>
    </ligand>
</feature>
<feature type="binding site" evidence="1">
    <location>
        <position position="143"/>
    </location>
    <ligand>
        <name>[2Fe-2S] cluster</name>
        <dbReference type="ChEBI" id="CHEBI:190135"/>
    </ligand>
</feature>
<feature type="binding site" evidence="1">
    <location>
        <position position="203"/>
    </location>
    <ligand>
        <name>[2Fe-2S] cluster</name>
        <dbReference type="ChEBI" id="CHEBI:190135"/>
    </ligand>
</feature>